<accession>Q67177</accession>
<name>M1_I78AF</name>
<organismHost>
    <name type="scientific">Aves</name>
    <dbReference type="NCBI Taxonomy" id="8782"/>
</organismHost>
<feature type="chain" id="PRO_0000326306" description="Matrix protein 1">
    <location>
        <begin position="1"/>
        <end position="252"/>
    </location>
</feature>
<feature type="region of interest" description="Membrane-binding" evidence="1">
    <location>
        <begin position="1"/>
        <end position="164"/>
    </location>
</feature>
<feature type="region of interest" description="RNP-binding" evidence="1">
    <location>
        <begin position="165"/>
        <end position="252"/>
    </location>
</feature>
<feature type="short sequence motif" description="Nuclear localization signal" evidence="1">
    <location>
        <begin position="101"/>
        <end position="105"/>
    </location>
</feature>
<keyword id="KW-0025">Alternative splicing</keyword>
<keyword id="KW-1048">Host nucleus</keyword>
<keyword id="KW-0472">Membrane</keyword>
<keyword id="KW-0694">RNA-binding</keyword>
<keyword id="KW-0468">Viral matrix protein</keyword>
<keyword id="KW-0946">Virion</keyword>
<protein>
    <recommendedName>
        <fullName evidence="1">Matrix protein 1</fullName>
        <shortName evidence="1">M1</shortName>
    </recommendedName>
</protein>
<comment type="function">
    <text evidence="1">Plays critical roles in virus replication, from virus entry and uncoating to assembly and budding of the virus particle. M1 binding to ribonucleocapsids (RNPs) in nucleus seems to inhibit viral transcription. Interaction of viral NEP with M1-RNP is thought to promote nuclear export of the complex, which is targeted to the virion assembly site at the apical plasma membrane in polarized epithelial cells. Interactions with NA and HA may bring M1, a non-raft-associated protein, into lipid rafts. Forms a continuous shell on the inner side of the lipid bilayer in virion, where it binds the RNP. During virus entry into cell, the M2 ion channel acidifies the internal virion core, inducing M1 dissociation from the RNP. M1-free RNPs are transported to the nucleus, where viral transcription and replication can take place.</text>
</comment>
<comment type="function">
    <text evidence="1">Determines the virion's shape: spherical or filamentous. Clinical isolates of influenza are characterized by the presence of significant proportion of filamentous virions, whereas after multiple passage on eggs or cell culture, virions have only spherical morphology. Filamentous virions are thought to be important to infect neighboring cells, and spherical virions more suited to spread through aerosol between hosts organisms.</text>
</comment>
<comment type="subunit">
    <text evidence="1">Homodimer and homomultimer. Interacts with NEP. Binds ribonucleocapsid by both interacting with genomic RNA and NP protein. May interact with HA and NA. Cannot bind NP without genomic RNA.</text>
</comment>
<comment type="subcellular location">
    <subcellularLocation>
        <location evidence="1">Virion membrane</location>
        <topology evidence="1">Peripheral membrane protein</topology>
        <orientation evidence="1">Cytoplasmic side</orientation>
    </subcellularLocation>
    <subcellularLocation>
        <location evidence="1">Host nucleus</location>
    </subcellularLocation>
</comment>
<comment type="alternative products">
    <event type="alternative splicing"/>
    <isoform>
        <id>Q67177-1</id>
        <name>M1</name>
        <sequence type="displayed"/>
    </isoform>
    <isoform>
        <id>Q67176-1</id>
        <name>M2</name>
        <sequence type="external"/>
    </isoform>
    <text>Only the first 9 residues are shared by the 2 isoforms.</text>
</comment>
<comment type="miscellaneous">
    <text evidence="1">Most abundant protein in virion. When expressed alone can form virus-like particles in transfected cells.</text>
</comment>
<comment type="similarity">
    <text evidence="1">Belongs to the influenza viruses Matrix protein M1 family.</text>
</comment>
<evidence type="ECO:0000255" key="1">
    <source>
        <dbReference type="HAMAP-Rule" id="MF_04068"/>
    </source>
</evidence>
<proteinExistence type="inferred from homology"/>
<gene>
    <name evidence="1" type="primary">M</name>
</gene>
<dbReference type="EMBL" id="M63539">
    <property type="protein sequence ID" value="AAA43298.1"/>
    <property type="molecule type" value="Genomic_RNA"/>
</dbReference>
<dbReference type="SMR" id="Q67177"/>
<dbReference type="GO" id="GO:0042025">
    <property type="term" value="C:host cell nucleus"/>
    <property type="evidence" value="ECO:0007669"/>
    <property type="project" value="UniProtKB-SubCell"/>
</dbReference>
<dbReference type="GO" id="GO:0016020">
    <property type="term" value="C:membrane"/>
    <property type="evidence" value="ECO:0007669"/>
    <property type="project" value="UniProtKB-KW"/>
</dbReference>
<dbReference type="GO" id="GO:0055036">
    <property type="term" value="C:virion membrane"/>
    <property type="evidence" value="ECO:0007669"/>
    <property type="project" value="UniProtKB-SubCell"/>
</dbReference>
<dbReference type="GO" id="GO:0003723">
    <property type="term" value="F:RNA binding"/>
    <property type="evidence" value="ECO:0007669"/>
    <property type="project" value="UniProtKB-UniRule"/>
</dbReference>
<dbReference type="GO" id="GO:0039660">
    <property type="term" value="F:structural constituent of virion"/>
    <property type="evidence" value="ECO:0007669"/>
    <property type="project" value="UniProtKB-UniRule"/>
</dbReference>
<dbReference type="GO" id="GO:0046761">
    <property type="term" value="P:viral budding from plasma membrane"/>
    <property type="evidence" value="ECO:0007669"/>
    <property type="project" value="UniProtKB-UniRule"/>
</dbReference>
<dbReference type="FunFam" id="1.10.10.180:FF:000001">
    <property type="entry name" value="Matrix protein 1"/>
    <property type="match status" value="1"/>
</dbReference>
<dbReference type="FunFam" id="1.20.91.10:FF:000001">
    <property type="entry name" value="Matrix protein 1"/>
    <property type="match status" value="1"/>
</dbReference>
<dbReference type="Gene3D" id="1.10.10.180">
    <property type="match status" value="1"/>
</dbReference>
<dbReference type="Gene3D" id="1.20.91.10">
    <property type="match status" value="1"/>
</dbReference>
<dbReference type="HAMAP" id="MF_04068">
    <property type="entry name" value="INFV_M1"/>
    <property type="match status" value="1"/>
</dbReference>
<dbReference type="InterPro" id="IPR036039">
    <property type="entry name" value="Flu_matrix_M1"/>
</dbReference>
<dbReference type="InterPro" id="IPR013188">
    <property type="entry name" value="Flu_matrix_M1_C"/>
</dbReference>
<dbReference type="InterPro" id="IPR001561">
    <property type="entry name" value="Flu_matrix_M1_N"/>
</dbReference>
<dbReference type="InterPro" id="IPR015423">
    <property type="entry name" value="Flu_matrix_M1_N_sub1"/>
</dbReference>
<dbReference type="InterPro" id="IPR015799">
    <property type="entry name" value="Flu_matrix_M1_N_sub2"/>
</dbReference>
<dbReference type="InterPro" id="IPR037533">
    <property type="entry name" value="INFV_M1"/>
</dbReference>
<dbReference type="Pfam" id="PF00598">
    <property type="entry name" value="Flu_M1"/>
    <property type="match status" value="1"/>
</dbReference>
<dbReference type="Pfam" id="PF08289">
    <property type="entry name" value="Flu_M1_C"/>
    <property type="match status" value="1"/>
</dbReference>
<dbReference type="SMART" id="SM00759">
    <property type="entry name" value="Flu_M1_C"/>
    <property type="match status" value="1"/>
</dbReference>
<dbReference type="SUPFAM" id="SSF48145">
    <property type="entry name" value="Influenza virus matrix protein M1"/>
    <property type="match status" value="1"/>
</dbReference>
<reference key="1">
    <citation type="journal article" date="1991" name="J. Virol.">
        <title>Evolutionary analysis of the influenza A virus M gene with comparison of the M1 and M2 proteins.</title>
        <authorList>
            <person name="Ito T."/>
            <person name="Gorman O.T."/>
            <person name="Kawaoka Y."/>
            <person name="Bean W.J."/>
            <person name="Webster R.G."/>
        </authorList>
    </citation>
    <scope>NUCLEOTIDE SEQUENCE [GENOMIC RNA]</scope>
</reference>
<sequence length="252" mass="27878">MSLLTEVETYVLSIVPSGPLKAEIAQRLEDVFAGKNTDLEALMEWLKTRPILSPLTKGILGFVFTLTVPSERGLQRRRFVQNALNGNGDPNNMDRAVKLYRKLKREITFHGAKEVALSYSTGALASCMGLIYNRMGTVTTEVAFGLVCATCEQIADSQHRSHRQMVTTTNPLIRHENRMVLASTTAKAMEQVAGSSEQAAEAMEVASQARQMVQAMRTIGTHPSSSAGLKDDLLENLQAYQKRMGVQMQRFK</sequence>
<organism>
    <name type="scientific">Influenza A virus (strain A/Gull/Maryland/1824/1978 H13N6)</name>
    <dbReference type="NCBI Taxonomy" id="385602"/>
    <lineage>
        <taxon>Viruses</taxon>
        <taxon>Riboviria</taxon>
        <taxon>Orthornavirae</taxon>
        <taxon>Negarnaviricota</taxon>
        <taxon>Polyploviricotina</taxon>
        <taxon>Insthoviricetes</taxon>
        <taxon>Articulavirales</taxon>
        <taxon>Orthomyxoviridae</taxon>
        <taxon>Alphainfluenzavirus</taxon>
        <taxon>Alphainfluenzavirus influenzae</taxon>
        <taxon>Influenza A virus</taxon>
    </lineage>
</organism>